<organism>
    <name type="scientific">Escherichia coli O139:H28 (strain E24377A / ETEC)</name>
    <dbReference type="NCBI Taxonomy" id="331111"/>
    <lineage>
        <taxon>Bacteria</taxon>
        <taxon>Pseudomonadati</taxon>
        <taxon>Pseudomonadota</taxon>
        <taxon>Gammaproteobacteria</taxon>
        <taxon>Enterobacterales</taxon>
        <taxon>Enterobacteriaceae</taxon>
        <taxon>Escherichia</taxon>
    </lineage>
</organism>
<dbReference type="EMBL" id="CP000800">
    <property type="protein sequence ID" value="ABV17144.1"/>
    <property type="molecule type" value="Genomic_DNA"/>
</dbReference>
<dbReference type="RefSeq" id="WP_000350095.1">
    <property type="nucleotide sequence ID" value="NC_009801.1"/>
</dbReference>
<dbReference type="BMRB" id="A7ZRT0"/>
<dbReference type="SMR" id="A7ZRT0"/>
<dbReference type="GeneID" id="93778946"/>
<dbReference type="KEGG" id="ecw:EcE24377A_3512"/>
<dbReference type="HOGENOM" id="CLU_185971_0_0_6"/>
<dbReference type="Proteomes" id="UP000001122">
    <property type="component" value="Chromosome"/>
</dbReference>
<dbReference type="GO" id="GO:1902201">
    <property type="term" value="P:negative regulation of bacterial-type flagellum-dependent cell motility"/>
    <property type="evidence" value="ECO:0007669"/>
    <property type="project" value="UniProtKB-UniRule"/>
</dbReference>
<dbReference type="GO" id="GO:1900191">
    <property type="term" value="P:negative regulation of single-species biofilm formation"/>
    <property type="evidence" value="ECO:0007669"/>
    <property type="project" value="UniProtKB-UniRule"/>
</dbReference>
<dbReference type="FunFam" id="1.20.970.20:FF:000001">
    <property type="entry name" value="Surface composition regulator"/>
    <property type="match status" value="1"/>
</dbReference>
<dbReference type="Gene3D" id="1.20.970.20">
    <property type="entry name" value="Glycogen synthesis protein GlgS"/>
    <property type="match status" value="1"/>
</dbReference>
<dbReference type="HAMAP" id="MF_00525">
    <property type="entry name" value="GlgS"/>
    <property type="match status" value="1"/>
</dbReference>
<dbReference type="InterPro" id="IPR015065">
    <property type="entry name" value="GlgS"/>
</dbReference>
<dbReference type="InterPro" id="IPR036295">
    <property type="entry name" value="GlgS_sf"/>
</dbReference>
<dbReference type="NCBIfam" id="NF002793">
    <property type="entry name" value="PRK02922.1"/>
    <property type="match status" value="1"/>
</dbReference>
<dbReference type="Pfam" id="PF08971">
    <property type="entry name" value="GlgS"/>
    <property type="match status" value="1"/>
</dbReference>
<dbReference type="SUPFAM" id="SSF109747">
    <property type="entry name" value="Glycogen synthesis protein GlgS"/>
    <property type="match status" value="1"/>
</dbReference>
<evidence type="ECO:0000255" key="1">
    <source>
        <dbReference type="HAMAP-Rule" id="MF_00525"/>
    </source>
</evidence>
<keyword id="KW-1185">Reference proteome</keyword>
<name>GLGS_ECO24</name>
<feature type="chain" id="PRO_1000060927" description="Surface composition regulator">
    <location>
        <begin position="1"/>
        <end position="66"/>
    </location>
</feature>
<accession>A7ZRT0</accession>
<proteinExistence type="inferred from homology"/>
<sequence>MDHSLNSLNNFDFLARSFARMHAEGRPVDILAVTGNMDEEHRTWFCARYAWYCQQMMQARELELEH</sequence>
<reference key="1">
    <citation type="journal article" date="2008" name="J. Bacteriol.">
        <title>The pangenome structure of Escherichia coli: comparative genomic analysis of E. coli commensal and pathogenic isolates.</title>
        <authorList>
            <person name="Rasko D.A."/>
            <person name="Rosovitz M.J."/>
            <person name="Myers G.S.A."/>
            <person name="Mongodin E.F."/>
            <person name="Fricke W.F."/>
            <person name="Gajer P."/>
            <person name="Crabtree J."/>
            <person name="Sebaihia M."/>
            <person name="Thomson N.R."/>
            <person name="Chaudhuri R."/>
            <person name="Henderson I.R."/>
            <person name="Sperandio V."/>
            <person name="Ravel J."/>
        </authorList>
    </citation>
    <scope>NUCLEOTIDE SEQUENCE [LARGE SCALE GENOMIC DNA]</scope>
    <source>
        <strain>E24377A / ETEC</strain>
    </source>
</reference>
<gene>
    <name evidence="1" type="primary">glgS</name>
    <name type="ordered locus">EcE24377A_3512</name>
</gene>
<comment type="function">
    <text evidence="1">Major determinant of cell surface composition. Negatively regulates motility, adhesion and synthesis of biofilm exopolysaccharides.</text>
</comment>
<comment type="similarity">
    <text evidence="1">Belongs to the GlgS family.</text>
</comment>
<protein>
    <recommendedName>
        <fullName evidence="1">Surface composition regulator</fullName>
    </recommendedName>
</protein>